<comment type="function">
    <text evidence="1">Catalyzes the reversible cyclization of carbamoyl aspartate to dihydroorotate.</text>
</comment>
<comment type="catalytic activity">
    <reaction evidence="1">
        <text>(S)-dihydroorotate + H2O = N-carbamoyl-L-aspartate + H(+)</text>
        <dbReference type="Rhea" id="RHEA:24296"/>
        <dbReference type="ChEBI" id="CHEBI:15377"/>
        <dbReference type="ChEBI" id="CHEBI:15378"/>
        <dbReference type="ChEBI" id="CHEBI:30864"/>
        <dbReference type="ChEBI" id="CHEBI:32814"/>
        <dbReference type="EC" id="3.5.2.3"/>
    </reaction>
</comment>
<comment type="cofactor">
    <cofactor evidence="1">
        <name>Zn(2+)</name>
        <dbReference type="ChEBI" id="CHEBI:29105"/>
    </cofactor>
    <text evidence="1">Binds 2 Zn(2+) ions per subunit.</text>
</comment>
<comment type="pathway">
    <text evidence="1">Pyrimidine metabolism; UMP biosynthesis via de novo pathway; (S)-dihydroorotate from bicarbonate: step 3/3.</text>
</comment>
<comment type="similarity">
    <text evidence="1">Belongs to the metallo-dependent hydrolases superfamily. DHOase family. Class I DHOase subfamily.</text>
</comment>
<name>PYRC_METMA</name>
<reference key="1">
    <citation type="journal article" date="2002" name="J. Mol. Microbiol. Biotechnol.">
        <title>The genome of Methanosarcina mazei: evidence for lateral gene transfer between Bacteria and Archaea.</title>
        <authorList>
            <person name="Deppenmeier U."/>
            <person name="Johann A."/>
            <person name="Hartsch T."/>
            <person name="Merkl R."/>
            <person name="Schmitz R.A."/>
            <person name="Martinez-Arias R."/>
            <person name="Henne A."/>
            <person name="Wiezer A."/>
            <person name="Baeumer S."/>
            <person name="Jacobi C."/>
            <person name="Brueggemann H."/>
            <person name="Lienard T."/>
            <person name="Christmann A."/>
            <person name="Boemecke M."/>
            <person name="Steckel S."/>
            <person name="Bhattacharyya A."/>
            <person name="Lykidis A."/>
            <person name="Overbeek R."/>
            <person name="Klenk H.-P."/>
            <person name="Gunsalus R.P."/>
            <person name="Fritz H.-J."/>
            <person name="Gottschalk G."/>
        </authorList>
    </citation>
    <scope>NUCLEOTIDE SEQUENCE [LARGE SCALE GENOMIC DNA]</scope>
    <source>
        <strain>ATCC BAA-159 / DSM 3647 / Goe1 / Go1 / JCM 11833 / OCM 88</strain>
    </source>
</reference>
<evidence type="ECO:0000255" key="1">
    <source>
        <dbReference type="HAMAP-Rule" id="MF_00220"/>
    </source>
</evidence>
<keyword id="KW-0378">Hydrolase</keyword>
<keyword id="KW-0479">Metal-binding</keyword>
<keyword id="KW-0665">Pyrimidine biosynthesis</keyword>
<keyword id="KW-0862">Zinc</keyword>
<proteinExistence type="inferred from homology"/>
<organism>
    <name type="scientific">Methanosarcina mazei (strain ATCC BAA-159 / DSM 3647 / Goe1 / Go1 / JCM 11833 / OCM 88)</name>
    <name type="common">Methanosarcina frisia</name>
    <dbReference type="NCBI Taxonomy" id="192952"/>
    <lineage>
        <taxon>Archaea</taxon>
        <taxon>Methanobacteriati</taxon>
        <taxon>Methanobacteriota</taxon>
        <taxon>Stenosarchaea group</taxon>
        <taxon>Methanomicrobia</taxon>
        <taxon>Methanosarcinales</taxon>
        <taxon>Methanosarcinaceae</taxon>
        <taxon>Methanosarcina</taxon>
    </lineage>
</organism>
<protein>
    <recommendedName>
        <fullName evidence="1">Dihydroorotase</fullName>
        <shortName evidence="1">DHOase</shortName>
        <ecNumber evidence="1">3.5.2.3</ecNumber>
    </recommendedName>
</protein>
<feature type="chain" id="PRO_0000147272" description="Dihydroorotase">
    <location>
        <begin position="1"/>
        <end position="456"/>
    </location>
</feature>
<feature type="active site" evidence="1">
    <location>
        <position position="313"/>
    </location>
</feature>
<feature type="binding site" evidence="1">
    <location>
        <position position="60"/>
    </location>
    <ligand>
        <name>Zn(2+)</name>
        <dbReference type="ChEBI" id="CHEBI:29105"/>
        <label>1</label>
    </ligand>
</feature>
<feature type="binding site" evidence="1">
    <location>
        <begin position="62"/>
        <end position="64"/>
    </location>
    <ligand>
        <name>substrate</name>
    </ligand>
</feature>
<feature type="binding site" evidence="1">
    <location>
        <position position="62"/>
    </location>
    <ligand>
        <name>Zn(2+)</name>
        <dbReference type="ChEBI" id="CHEBI:29105"/>
        <label>1</label>
    </ligand>
</feature>
<feature type="binding site" evidence="1">
    <location>
        <position position="94"/>
    </location>
    <ligand>
        <name>substrate</name>
    </ligand>
</feature>
<feature type="binding site" evidence="1">
    <location>
        <position position="146"/>
    </location>
    <ligand>
        <name>Zn(2+)</name>
        <dbReference type="ChEBI" id="CHEBI:29105"/>
        <label>1</label>
    </ligand>
</feature>
<feature type="binding site" evidence="1">
    <location>
        <position position="146"/>
    </location>
    <ligand>
        <name>Zn(2+)</name>
        <dbReference type="ChEBI" id="CHEBI:29105"/>
        <label>2</label>
    </ligand>
</feature>
<feature type="binding site" evidence="1">
    <location>
        <position position="180"/>
    </location>
    <ligand>
        <name>Zn(2+)</name>
        <dbReference type="ChEBI" id="CHEBI:29105"/>
        <label>2</label>
    </ligand>
</feature>
<feature type="binding site" evidence="1">
    <location>
        <position position="234"/>
    </location>
    <ligand>
        <name>Zn(2+)</name>
        <dbReference type="ChEBI" id="CHEBI:29105"/>
        <label>2</label>
    </ligand>
</feature>
<feature type="binding site" evidence="1">
    <location>
        <position position="313"/>
    </location>
    <ligand>
        <name>Zn(2+)</name>
        <dbReference type="ChEBI" id="CHEBI:29105"/>
        <label>1</label>
    </ligand>
</feature>
<feature type="binding site" evidence="1">
    <location>
        <position position="317"/>
    </location>
    <ligand>
        <name>substrate</name>
    </ligand>
</feature>
<dbReference type="EC" id="3.5.2.3" evidence="1"/>
<dbReference type="EMBL" id="AE008384">
    <property type="protein sequence ID" value="AAM31707.1"/>
    <property type="molecule type" value="Genomic_DNA"/>
</dbReference>
<dbReference type="RefSeq" id="WP_011033943.1">
    <property type="nucleotide sequence ID" value="NC_003901.1"/>
</dbReference>
<dbReference type="SMR" id="Q8PVF4"/>
<dbReference type="KEGG" id="mma:MM_2011"/>
<dbReference type="PATRIC" id="fig|192952.21.peg.2313"/>
<dbReference type="eggNOG" id="arCOG00689">
    <property type="taxonomic scope" value="Archaea"/>
</dbReference>
<dbReference type="HOGENOM" id="CLU_015572_1_1_2"/>
<dbReference type="UniPathway" id="UPA00070">
    <property type="reaction ID" value="UER00117"/>
</dbReference>
<dbReference type="Proteomes" id="UP000000595">
    <property type="component" value="Chromosome"/>
</dbReference>
<dbReference type="GO" id="GO:0005737">
    <property type="term" value="C:cytoplasm"/>
    <property type="evidence" value="ECO:0007669"/>
    <property type="project" value="TreeGrafter"/>
</dbReference>
<dbReference type="GO" id="GO:0004038">
    <property type="term" value="F:allantoinase activity"/>
    <property type="evidence" value="ECO:0007669"/>
    <property type="project" value="TreeGrafter"/>
</dbReference>
<dbReference type="GO" id="GO:0004151">
    <property type="term" value="F:dihydroorotase activity"/>
    <property type="evidence" value="ECO:0007669"/>
    <property type="project" value="UniProtKB-UniRule"/>
</dbReference>
<dbReference type="GO" id="GO:0008270">
    <property type="term" value="F:zinc ion binding"/>
    <property type="evidence" value="ECO:0007669"/>
    <property type="project" value="UniProtKB-UniRule"/>
</dbReference>
<dbReference type="GO" id="GO:0044205">
    <property type="term" value="P:'de novo' UMP biosynthetic process"/>
    <property type="evidence" value="ECO:0007669"/>
    <property type="project" value="UniProtKB-UniRule"/>
</dbReference>
<dbReference type="GO" id="GO:0006145">
    <property type="term" value="P:purine nucleobase catabolic process"/>
    <property type="evidence" value="ECO:0007669"/>
    <property type="project" value="TreeGrafter"/>
</dbReference>
<dbReference type="CDD" id="cd01318">
    <property type="entry name" value="DHOase_IIb"/>
    <property type="match status" value="1"/>
</dbReference>
<dbReference type="FunFam" id="3.20.20.140:FF:000174">
    <property type="entry name" value="Dihydropyrimidinase-related protein 2"/>
    <property type="match status" value="1"/>
</dbReference>
<dbReference type="Gene3D" id="3.20.20.140">
    <property type="entry name" value="Metal-dependent hydrolases"/>
    <property type="match status" value="1"/>
</dbReference>
<dbReference type="Gene3D" id="2.30.40.10">
    <property type="entry name" value="Urease, subunit C, domain 1"/>
    <property type="match status" value="1"/>
</dbReference>
<dbReference type="HAMAP" id="MF_00220_A">
    <property type="entry name" value="PyrC_classI_A"/>
    <property type="match status" value="1"/>
</dbReference>
<dbReference type="InterPro" id="IPR006680">
    <property type="entry name" value="Amidohydro-rel"/>
</dbReference>
<dbReference type="InterPro" id="IPR004722">
    <property type="entry name" value="DHOase"/>
</dbReference>
<dbReference type="InterPro" id="IPR050138">
    <property type="entry name" value="DHOase/Allantoinase_Hydrolase"/>
</dbReference>
<dbReference type="InterPro" id="IPR002195">
    <property type="entry name" value="Dihydroorotase_CS"/>
</dbReference>
<dbReference type="InterPro" id="IPR011059">
    <property type="entry name" value="Metal-dep_hydrolase_composite"/>
</dbReference>
<dbReference type="InterPro" id="IPR032466">
    <property type="entry name" value="Metal_Hydrolase"/>
</dbReference>
<dbReference type="NCBIfam" id="NF002668">
    <property type="entry name" value="PRK02382.1"/>
    <property type="match status" value="1"/>
</dbReference>
<dbReference type="NCBIfam" id="TIGR00857">
    <property type="entry name" value="pyrC_multi"/>
    <property type="match status" value="1"/>
</dbReference>
<dbReference type="PANTHER" id="PTHR43668">
    <property type="entry name" value="ALLANTOINASE"/>
    <property type="match status" value="1"/>
</dbReference>
<dbReference type="PANTHER" id="PTHR43668:SF2">
    <property type="entry name" value="ALLANTOINASE"/>
    <property type="match status" value="1"/>
</dbReference>
<dbReference type="Pfam" id="PF01979">
    <property type="entry name" value="Amidohydro_1"/>
    <property type="match status" value="1"/>
</dbReference>
<dbReference type="SUPFAM" id="SSF51338">
    <property type="entry name" value="Composite domain of metallo-dependent hydrolases"/>
    <property type="match status" value="1"/>
</dbReference>
<dbReference type="SUPFAM" id="SSF51556">
    <property type="entry name" value="Metallo-dependent hydrolases"/>
    <property type="match status" value="1"/>
</dbReference>
<dbReference type="PROSITE" id="PS00482">
    <property type="entry name" value="DIHYDROOROTASE_1"/>
    <property type="match status" value="1"/>
</dbReference>
<dbReference type="PROSITE" id="PS00483">
    <property type="entry name" value="DIHYDROOROTASE_2"/>
    <property type="match status" value="1"/>
</dbReference>
<accession>Q8PVF4</accession>
<sequence length="456" mass="50331">MPDIHIKNTRIYYNNSLQPAEIIIEHGKITKIGKDFRVSSSDMVIDAKGSLTLPAGIDVHVHFREPGMTLKENWYTGSCAAAAGGIATVIDQPNTIPPTTDRRSFEQKLELARKKSIVDFGINGGVTGNIEKLKELWRLGVTAFGEIFMAESTGGLNIKEEDFEEALAEIKRLGALATIHAEDEKMRLELEQLLKGDVSCDYHSKVRPNACEASAVQCALEIISRLGVKAHFCHLSTLEAVGMIRKEKYLAKRENKEPLFTCEVTPHHLFLSTRDWERLGVFGKMNPPLRGSHSIKALVNGLNDGTIDMVASDHAPHLESEKGPDIRAAPSGVPGVETLMPLMLAAVRKNILPLAKMIMLTSWNPARAFGLDLLGKGKLEVSYDADLMIVDPRNLQPVRADMLHSKAGWTPFEGIDAVFPEYTLSRGEVIWMEESINAKPGRGKFLEGKGKMSEED</sequence>
<gene>
    <name evidence="1" type="primary">pyrC</name>
    <name type="ordered locus">MM_2011</name>
</gene>